<gene>
    <name evidence="1" type="primary">rsmG</name>
    <name type="ordered locus">CLM_4146</name>
</gene>
<comment type="function">
    <text evidence="1">Specifically methylates the N7 position of a guanine in 16S rRNA.</text>
</comment>
<comment type="subcellular location">
    <subcellularLocation>
        <location evidence="1">Cytoplasm</location>
    </subcellularLocation>
</comment>
<comment type="similarity">
    <text evidence="1">Belongs to the methyltransferase superfamily. RNA methyltransferase RsmG family.</text>
</comment>
<accession>C1FP29</accession>
<keyword id="KW-0963">Cytoplasm</keyword>
<keyword id="KW-0489">Methyltransferase</keyword>
<keyword id="KW-0698">rRNA processing</keyword>
<keyword id="KW-0949">S-adenosyl-L-methionine</keyword>
<keyword id="KW-0808">Transferase</keyword>
<proteinExistence type="inferred from homology"/>
<organism>
    <name type="scientific">Clostridium botulinum (strain Kyoto / Type A2)</name>
    <dbReference type="NCBI Taxonomy" id="536232"/>
    <lineage>
        <taxon>Bacteria</taxon>
        <taxon>Bacillati</taxon>
        <taxon>Bacillota</taxon>
        <taxon>Clostridia</taxon>
        <taxon>Eubacteriales</taxon>
        <taxon>Clostridiaceae</taxon>
        <taxon>Clostridium</taxon>
    </lineage>
</organism>
<feature type="chain" id="PRO_1000118183" description="Ribosomal RNA small subunit methyltransferase G">
    <location>
        <begin position="1"/>
        <end position="239"/>
    </location>
</feature>
<feature type="binding site" evidence="1">
    <location>
        <position position="78"/>
    </location>
    <ligand>
        <name>S-adenosyl-L-methionine</name>
        <dbReference type="ChEBI" id="CHEBI:59789"/>
    </ligand>
</feature>
<feature type="binding site" evidence="1">
    <location>
        <position position="83"/>
    </location>
    <ligand>
        <name>S-adenosyl-L-methionine</name>
        <dbReference type="ChEBI" id="CHEBI:59789"/>
    </ligand>
</feature>
<feature type="binding site" evidence="1">
    <location>
        <begin position="129"/>
        <end position="130"/>
    </location>
    <ligand>
        <name>S-adenosyl-L-methionine</name>
        <dbReference type="ChEBI" id="CHEBI:59789"/>
    </ligand>
</feature>
<feature type="binding site" evidence="1">
    <location>
        <position position="148"/>
    </location>
    <ligand>
        <name>S-adenosyl-L-methionine</name>
        <dbReference type="ChEBI" id="CHEBI:59789"/>
    </ligand>
</feature>
<dbReference type="EC" id="2.1.1.-" evidence="1"/>
<dbReference type="EMBL" id="CP001581">
    <property type="protein sequence ID" value="ACO85013.1"/>
    <property type="molecule type" value="Genomic_DNA"/>
</dbReference>
<dbReference type="RefSeq" id="WP_012704531.1">
    <property type="nucleotide sequence ID" value="NC_012563.1"/>
</dbReference>
<dbReference type="SMR" id="C1FP29"/>
<dbReference type="KEGG" id="cby:CLM_4146"/>
<dbReference type="eggNOG" id="COG0357">
    <property type="taxonomic scope" value="Bacteria"/>
</dbReference>
<dbReference type="HOGENOM" id="CLU_065341_0_0_9"/>
<dbReference type="Proteomes" id="UP000001374">
    <property type="component" value="Chromosome"/>
</dbReference>
<dbReference type="GO" id="GO:0005829">
    <property type="term" value="C:cytosol"/>
    <property type="evidence" value="ECO:0007669"/>
    <property type="project" value="TreeGrafter"/>
</dbReference>
<dbReference type="GO" id="GO:0070043">
    <property type="term" value="F:rRNA (guanine-N7-)-methyltransferase activity"/>
    <property type="evidence" value="ECO:0007669"/>
    <property type="project" value="UniProtKB-UniRule"/>
</dbReference>
<dbReference type="CDD" id="cd02440">
    <property type="entry name" value="AdoMet_MTases"/>
    <property type="match status" value="1"/>
</dbReference>
<dbReference type="FunFam" id="3.40.50.150:FF:000041">
    <property type="entry name" value="Ribosomal RNA small subunit methyltransferase G"/>
    <property type="match status" value="1"/>
</dbReference>
<dbReference type="Gene3D" id="3.40.50.150">
    <property type="entry name" value="Vaccinia Virus protein VP39"/>
    <property type="match status" value="1"/>
</dbReference>
<dbReference type="HAMAP" id="MF_00074">
    <property type="entry name" value="16SrRNA_methyltr_G"/>
    <property type="match status" value="1"/>
</dbReference>
<dbReference type="InterPro" id="IPR003682">
    <property type="entry name" value="rRNA_ssu_MeTfrase_G"/>
</dbReference>
<dbReference type="InterPro" id="IPR029063">
    <property type="entry name" value="SAM-dependent_MTases_sf"/>
</dbReference>
<dbReference type="NCBIfam" id="TIGR00138">
    <property type="entry name" value="rsmG_gidB"/>
    <property type="match status" value="1"/>
</dbReference>
<dbReference type="PANTHER" id="PTHR31760">
    <property type="entry name" value="S-ADENOSYL-L-METHIONINE-DEPENDENT METHYLTRANSFERASES SUPERFAMILY PROTEIN"/>
    <property type="match status" value="1"/>
</dbReference>
<dbReference type="PANTHER" id="PTHR31760:SF0">
    <property type="entry name" value="S-ADENOSYL-L-METHIONINE-DEPENDENT METHYLTRANSFERASES SUPERFAMILY PROTEIN"/>
    <property type="match status" value="1"/>
</dbReference>
<dbReference type="Pfam" id="PF02527">
    <property type="entry name" value="GidB"/>
    <property type="match status" value="1"/>
</dbReference>
<dbReference type="PIRSF" id="PIRSF003078">
    <property type="entry name" value="GidB"/>
    <property type="match status" value="1"/>
</dbReference>
<dbReference type="SUPFAM" id="SSF53335">
    <property type="entry name" value="S-adenosyl-L-methionine-dependent methyltransferases"/>
    <property type="match status" value="1"/>
</dbReference>
<sequence length="239" mass="27156">MEFFNILQSACNDVNLDFNDKKYNQLISYKNLIQEWNKKINLTAIVEDDEIIKKHFIDCIKIFKSSPIGEAKSLIDIGTGAGFPGIPIKILKEDIEITLLDSLQKRINFLNIVIGELQLKNIQCLHGRAEDYAQEIQHRQKYDIAVSRAVANLAVLSEFCIPFVEKGGYFIAMKGPSVEEEITAATKSIEILGGKIEDIMKIDIEDTDLKHNLVIIKKLRETGKRYPRKPGIIKKNPLK</sequence>
<protein>
    <recommendedName>
        <fullName evidence="1">Ribosomal RNA small subunit methyltransferase G</fullName>
        <ecNumber evidence="1">2.1.1.-</ecNumber>
    </recommendedName>
    <alternativeName>
        <fullName evidence="1">16S rRNA 7-methylguanosine methyltransferase</fullName>
        <shortName evidence="1">16S rRNA m7G methyltransferase</shortName>
    </alternativeName>
</protein>
<evidence type="ECO:0000255" key="1">
    <source>
        <dbReference type="HAMAP-Rule" id="MF_00074"/>
    </source>
</evidence>
<name>RSMG_CLOBJ</name>
<reference key="1">
    <citation type="submission" date="2008-10" db="EMBL/GenBank/DDBJ databases">
        <title>Genome sequence of Clostridium botulinum A2 Kyoto.</title>
        <authorList>
            <person name="Shrivastava S."/>
            <person name="Brinkac L.M."/>
            <person name="Brown J.L."/>
            <person name="Bruce D."/>
            <person name="Detter C.C."/>
            <person name="Johnson E.A."/>
            <person name="Munk C.A."/>
            <person name="Smith L.A."/>
            <person name="Smith T.J."/>
            <person name="Sutton G."/>
            <person name="Brettin T.S."/>
        </authorList>
    </citation>
    <scope>NUCLEOTIDE SEQUENCE [LARGE SCALE GENOMIC DNA]</scope>
    <source>
        <strain>Kyoto / Type A2</strain>
    </source>
</reference>